<name>RSMH_NATTJ</name>
<protein>
    <recommendedName>
        <fullName evidence="1">Ribosomal RNA small subunit methyltransferase H</fullName>
        <ecNumber evidence="1">2.1.1.199</ecNumber>
    </recommendedName>
    <alternativeName>
        <fullName evidence="1">16S rRNA m(4)C1402 methyltransferase</fullName>
    </alternativeName>
    <alternativeName>
        <fullName evidence="1">rRNA (cytosine-N(4)-)-methyltransferase RsmH</fullName>
    </alternativeName>
</protein>
<reference key="1">
    <citation type="submission" date="2008-04" db="EMBL/GenBank/DDBJ databases">
        <title>Complete sequence of chromosome of Natranaerobius thermophilus JW/NM-WN-LF.</title>
        <authorList>
            <consortium name="US DOE Joint Genome Institute"/>
            <person name="Copeland A."/>
            <person name="Lucas S."/>
            <person name="Lapidus A."/>
            <person name="Glavina del Rio T."/>
            <person name="Dalin E."/>
            <person name="Tice H."/>
            <person name="Bruce D."/>
            <person name="Goodwin L."/>
            <person name="Pitluck S."/>
            <person name="Chertkov O."/>
            <person name="Brettin T."/>
            <person name="Detter J.C."/>
            <person name="Han C."/>
            <person name="Kuske C.R."/>
            <person name="Schmutz J."/>
            <person name="Larimer F."/>
            <person name="Land M."/>
            <person name="Hauser L."/>
            <person name="Kyrpides N."/>
            <person name="Lykidis A."/>
            <person name="Mesbah N.M."/>
            <person name="Wiegel J."/>
        </authorList>
    </citation>
    <scope>NUCLEOTIDE SEQUENCE [LARGE SCALE GENOMIC DNA]</scope>
    <source>
        <strain>ATCC BAA-1301 / DSM 18059 / JW/NM-WN-LF</strain>
    </source>
</reference>
<gene>
    <name evidence="1" type="primary">rsmH</name>
    <name type="synonym">mraW</name>
    <name type="ordered locus">Nther_1296</name>
</gene>
<feature type="chain" id="PRO_0000387002" description="Ribosomal RNA small subunit methyltransferase H">
    <location>
        <begin position="1"/>
        <end position="315"/>
    </location>
</feature>
<feature type="binding site" evidence="1">
    <location>
        <begin position="33"/>
        <end position="35"/>
    </location>
    <ligand>
        <name>S-adenosyl-L-methionine</name>
        <dbReference type="ChEBI" id="CHEBI:59789"/>
    </ligand>
</feature>
<feature type="binding site" evidence="1">
    <location>
        <position position="53"/>
    </location>
    <ligand>
        <name>S-adenosyl-L-methionine</name>
        <dbReference type="ChEBI" id="CHEBI:59789"/>
    </ligand>
</feature>
<feature type="binding site" evidence="1">
    <location>
        <position position="80"/>
    </location>
    <ligand>
        <name>S-adenosyl-L-methionine</name>
        <dbReference type="ChEBI" id="CHEBI:59789"/>
    </ligand>
</feature>
<feature type="binding site" evidence="1">
    <location>
        <position position="101"/>
    </location>
    <ligand>
        <name>S-adenosyl-L-methionine</name>
        <dbReference type="ChEBI" id="CHEBI:59789"/>
    </ligand>
</feature>
<feature type="binding site" evidence="1">
    <location>
        <position position="108"/>
    </location>
    <ligand>
        <name>S-adenosyl-L-methionine</name>
        <dbReference type="ChEBI" id="CHEBI:59789"/>
    </ligand>
</feature>
<organism>
    <name type="scientific">Natranaerobius thermophilus (strain ATCC BAA-1301 / DSM 18059 / JW/NM-WN-LF)</name>
    <dbReference type="NCBI Taxonomy" id="457570"/>
    <lineage>
        <taxon>Bacteria</taxon>
        <taxon>Bacillati</taxon>
        <taxon>Bacillota</taxon>
        <taxon>Clostridia</taxon>
        <taxon>Natranaerobiales</taxon>
        <taxon>Natranaerobiaceae</taxon>
        <taxon>Natranaerobius</taxon>
    </lineage>
</organism>
<evidence type="ECO:0000255" key="1">
    <source>
        <dbReference type="HAMAP-Rule" id="MF_01007"/>
    </source>
</evidence>
<sequence length="315" mass="35251">MNFNHEPVMIEKTIELLKPESAQVIVDGTMGGAGHSLRIINSLPPEGILVGIDQDPDAYEAGKSLLEAYGNKAKVFNDNFVNIKHICERIGIHYVDGILLDLGVSSYQLDNKDRGFTYQENAPLDMRMDKSQKITASEVVNTYSEQKLAEIIREYGEEKWAQRIAQFIVQARQDQEINTTQELVKVIKAAIPKGARKSGPHPAKRTFQALRIHVNGELDSLRTAIQEGIRLLRGKGRFVVITFHSLEDRIVKQEFKKLAQTCVCPTKLPICQCKGEATVKLLTKKPLLPSQGEIEINPRARSAKLRAVERLGSNN</sequence>
<comment type="function">
    <text evidence="1">Specifically methylates the N4 position of cytidine in position 1402 (C1402) of 16S rRNA.</text>
</comment>
<comment type="catalytic activity">
    <reaction evidence="1">
        <text>cytidine(1402) in 16S rRNA + S-adenosyl-L-methionine = N(4)-methylcytidine(1402) in 16S rRNA + S-adenosyl-L-homocysteine + H(+)</text>
        <dbReference type="Rhea" id="RHEA:42928"/>
        <dbReference type="Rhea" id="RHEA-COMP:10286"/>
        <dbReference type="Rhea" id="RHEA-COMP:10287"/>
        <dbReference type="ChEBI" id="CHEBI:15378"/>
        <dbReference type="ChEBI" id="CHEBI:57856"/>
        <dbReference type="ChEBI" id="CHEBI:59789"/>
        <dbReference type="ChEBI" id="CHEBI:74506"/>
        <dbReference type="ChEBI" id="CHEBI:82748"/>
        <dbReference type="EC" id="2.1.1.199"/>
    </reaction>
</comment>
<comment type="subcellular location">
    <subcellularLocation>
        <location evidence="1">Cytoplasm</location>
    </subcellularLocation>
</comment>
<comment type="similarity">
    <text evidence="1">Belongs to the methyltransferase superfamily. RsmH family.</text>
</comment>
<accession>B2A2G4</accession>
<dbReference type="EC" id="2.1.1.199" evidence="1"/>
<dbReference type="EMBL" id="CP001034">
    <property type="protein sequence ID" value="ACB84879.1"/>
    <property type="molecule type" value="Genomic_DNA"/>
</dbReference>
<dbReference type="RefSeq" id="WP_012447754.1">
    <property type="nucleotide sequence ID" value="NC_010718.1"/>
</dbReference>
<dbReference type="SMR" id="B2A2G4"/>
<dbReference type="FunCoup" id="B2A2G4">
    <property type="interactions" value="382"/>
</dbReference>
<dbReference type="STRING" id="457570.Nther_1296"/>
<dbReference type="KEGG" id="nth:Nther_1296"/>
<dbReference type="eggNOG" id="COG0275">
    <property type="taxonomic scope" value="Bacteria"/>
</dbReference>
<dbReference type="HOGENOM" id="CLU_038422_2_0_9"/>
<dbReference type="InParanoid" id="B2A2G4"/>
<dbReference type="OrthoDB" id="9806637at2"/>
<dbReference type="Proteomes" id="UP000001683">
    <property type="component" value="Chromosome"/>
</dbReference>
<dbReference type="GO" id="GO:0005737">
    <property type="term" value="C:cytoplasm"/>
    <property type="evidence" value="ECO:0007669"/>
    <property type="project" value="UniProtKB-SubCell"/>
</dbReference>
<dbReference type="GO" id="GO:0071424">
    <property type="term" value="F:rRNA (cytosine-N4-)-methyltransferase activity"/>
    <property type="evidence" value="ECO:0007669"/>
    <property type="project" value="UniProtKB-UniRule"/>
</dbReference>
<dbReference type="GO" id="GO:0070475">
    <property type="term" value="P:rRNA base methylation"/>
    <property type="evidence" value="ECO:0007669"/>
    <property type="project" value="UniProtKB-UniRule"/>
</dbReference>
<dbReference type="FunFam" id="1.10.150.170:FF:000001">
    <property type="entry name" value="Ribosomal RNA small subunit methyltransferase H"/>
    <property type="match status" value="1"/>
</dbReference>
<dbReference type="Gene3D" id="1.10.150.170">
    <property type="entry name" value="Putative methyltransferase TM0872, insert domain"/>
    <property type="match status" value="1"/>
</dbReference>
<dbReference type="Gene3D" id="3.40.50.150">
    <property type="entry name" value="Vaccinia Virus protein VP39"/>
    <property type="match status" value="1"/>
</dbReference>
<dbReference type="HAMAP" id="MF_01007">
    <property type="entry name" value="16SrRNA_methyltr_H"/>
    <property type="match status" value="1"/>
</dbReference>
<dbReference type="InterPro" id="IPR002903">
    <property type="entry name" value="RsmH"/>
</dbReference>
<dbReference type="InterPro" id="IPR023397">
    <property type="entry name" value="SAM-dep_MeTrfase_MraW_recog"/>
</dbReference>
<dbReference type="InterPro" id="IPR029063">
    <property type="entry name" value="SAM-dependent_MTases_sf"/>
</dbReference>
<dbReference type="NCBIfam" id="TIGR00006">
    <property type="entry name" value="16S rRNA (cytosine(1402)-N(4))-methyltransferase RsmH"/>
    <property type="match status" value="1"/>
</dbReference>
<dbReference type="PANTHER" id="PTHR11265:SF0">
    <property type="entry name" value="12S RRNA N4-METHYLCYTIDINE METHYLTRANSFERASE"/>
    <property type="match status" value="1"/>
</dbReference>
<dbReference type="PANTHER" id="PTHR11265">
    <property type="entry name" value="S-ADENOSYL-METHYLTRANSFERASE MRAW"/>
    <property type="match status" value="1"/>
</dbReference>
<dbReference type="Pfam" id="PF01795">
    <property type="entry name" value="Methyltransf_5"/>
    <property type="match status" value="1"/>
</dbReference>
<dbReference type="PIRSF" id="PIRSF004486">
    <property type="entry name" value="MraW"/>
    <property type="match status" value="1"/>
</dbReference>
<dbReference type="SUPFAM" id="SSF81799">
    <property type="entry name" value="Putative methyltransferase TM0872, insert domain"/>
    <property type="match status" value="1"/>
</dbReference>
<dbReference type="SUPFAM" id="SSF53335">
    <property type="entry name" value="S-adenosyl-L-methionine-dependent methyltransferases"/>
    <property type="match status" value="1"/>
</dbReference>
<proteinExistence type="inferred from homology"/>
<keyword id="KW-0963">Cytoplasm</keyword>
<keyword id="KW-0489">Methyltransferase</keyword>
<keyword id="KW-1185">Reference proteome</keyword>
<keyword id="KW-0698">rRNA processing</keyword>
<keyword id="KW-0949">S-adenosyl-L-methionine</keyword>
<keyword id="KW-0808">Transferase</keyword>